<sequence>MIKPLIEFCVGNLASGSQAALEKLEKDPNLDVMEYGCLGYCGICFEGPFALVNGEVVQGATVEELVNNVYEYLDENPMF</sequence>
<feature type="chain" id="PRO_1000185236" description="UPF0349 protein BAA_5208">
    <location>
        <begin position="1"/>
        <end position="79"/>
    </location>
</feature>
<organism>
    <name type="scientific">Bacillus anthracis (strain A0248)</name>
    <dbReference type="NCBI Taxonomy" id="592021"/>
    <lineage>
        <taxon>Bacteria</taxon>
        <taxon>Bacillati</taxon>
        <taxon>Bacillota</taxon>
        <taxon>Bacilli</taxon>
        <taxon>Bacillales</taxon>
        <taxon>Bacillaceae</taxon>
        <taxon>Bacillus</taxon>
        <taxon>Bacillus cereus group</taxon>
    </lineage>
</organism>
<name>Y5208_BACAA</name>
<gene>
    <name type="ordered locus">BAA_5208</name>
</gene>
<comment type="similarity">
    <text evidence="1">Belongs to the UPF0349 family.</text>
</comment>
<accession>C3PDH1</accession>
<evidence type="ECO:0000255" key="1">
    <source>
        <dbReference type="HAMAP-Rule" id="MF_01542"/>
    </source>
</evidence>
<protein>
    <recommendedName>
        <fullName evidence="1">UPF0349 protein BAA_5208</fullName>
    </recommendedName>
</protein>
<dbReference type="EMBL" id="CP001598">
    <property type="protein sequence ID" value="ACQ48775.1"/>
    <property type="molecule type" value="Genomic_DNA"/>
</dbReference>
<dbReference type="RefSeq" id="WP_000595026.1">
    <property type="nucleotide sequence ID" value="NC_012659.1"/>
</dbReference>
<dbReference type="SMR" id="C3PDH1"/>
<dbReference type="KEGG" id="bai:BAA_5208"/>
<dbReference type="HOGENOM" id="CLU_182025_0_0_9"/>
<dbReference type="HAMAP" id="MF_01542">
    <property type="entry name" value="UPF0349"/>
    <property type="match status" value="1"/>
</dbReference>
<dbReference type="InterPro" id="IPR009910">
    <property type="entry name" value="DUF1450"/>
</dbReference>
<dbReference type="InterPro" id="IPR022916">
    <property type="entry name" value="UPF0349"/>
</dbReference>
<dbReference type="NCBIfam" id="NF010190">
    <property type="entry name" value="PRK13669.1"/>
    <property type="match status" value="1"/>
</dbReference>
<dbReference type="Pfam" id="PF07293">
    <property type="entry name" value="DUF1450"/>
    <property type="match status" value="1"/>
</dbReference>
<reference key="1">
    <citation type="submission" date="2009-04" db="EMBL/GenBank/DDBJ databases">
        <title>Genome sequence of Bacillus anthracis A0248.</title>
        <authorList>
            <person name="Dodson R.J."/>
            <person name="Munk A.C."/>
            <person name="Bruce D."/>
            <person name="Detter C."/>
            <person name="Tapia R."/>
            <person name="Sutton G."/>
            <person name="Sims D."/>
            <person name="Brettin T."/>
        </authorList>
    </citation>
    <scope>NUCLEOTIDE SEQUENCE [LARGE SCALE GENOMIC DNA]</scope>
    <source>
        <strain>A0248</strain>
    </source>
</reference>
<proteinExistence type="inferred from homology"/>